<protein>
    <recommendedName>
        <fullName>NADH-cytochrome b5 reductase 1</fullName>
        <ecNumber evidence="2">1.6.2.2</ecNumber>
    </recommendedName>
    <alternativeName>
        <fullName>Microsomal cytochrome b reductase</fullName>
    </alternativeName>
</protein>
<comment type="function">
    <text evidence="2">NADH-dependent reductase for DPH3 and cytochrome b5. Required for the first step of diphthamide biosynthesis, a post-translational modification of histidine which occurs in elongation factor 2. DPH1 and DPH2 transfer a 3-amino-3-carboxypropyl (ACP) group from S-adenosyl-L-methionine (SAM) to a histidine residue, the reaction is assisted by a reduction system comprising DPH3 and a NADH-dependent reductase, predominantly CBR1. By reducing DPH3, also involved in the formation of the tRNA wobble base modification mcm5s 2U (5-methoxycarbonylmethyl-2-thiouridine), mediated by the elongator complex. The cytochrome b5/NADH cytochrome b5 reductase electron transfer system supports the catalytic activity of several sterol biosynthetic enzymes.</text>
</comment>
<comment type="catalytic activity">
    <reaction evidence="2">
        <text>2 Fe(III)-[cytochrome b5] + NADH = 2 Fe(II)-[cytochrome b5] + NAD(+) + H(+)</text>
        <dbReference type="Rhea" id="RHEA:46680"/>
        <dbReference type="Rhea" id="RHEA-COMP:10438"/>
        <dbReference type="Rhea" id="RHEA-COMP:10439"/>
        <dbReference type="ChEBI" id="CHEBI:15378"/>
        <dbReference type="ChEBI" id="CHEBI:29033"/>
        <dbReference type="ChEBI" id="CHEBI:29034"/>
        <dbReference type="ChEBI" id="CHEBI:57540"/>
        <dbReference type="ChEBI" id="CHEBI:57945"/>
        <dbReference type="EC" id="1.6.2.2"/>
    </reaction>
</comment>
<comment type="catalytic activity">
    <reaction evidence="2">
        <text>2 Fe(3+)-[Dph3] + NADH = 2 Fe(2+)-[Dph3] + NAD(+) + H(+)</text>
        <dbReference type="Rhea" id="RHEA:71231"/>
        <dbReference type="Rhea" id="RHEA-COMP:18002"/>
        <dbReference type="Rhea" id="RHEA-COMP:18003"/>
        <dbReference type="ChEBI" id="CHEBI:15378"/>
        <dbReference type="ChEBI" id="CHEBI:29033"/>
        <dbReference type="ChEBI" id="CHEBI:29034"/>
        <dbReference type="ChEBI" id="CHEBI:57540"/>
        <dbReference type="ChEBI" id="CHEBI:57945"/>
        <dbReference type="ChEBI" id="CHEBI:83228"/>
    </reaction>
    <physiologicalReaction direction="left-to-right" evidence="2">
        <dbReference type="Rhea" id="RHEA:71232"/>
    </physiologicalReaction>
</comment>
<comment type="cofactor">
    <cofactor evidence="3">
        <name>FAD</name>
        <dbReference type="ChEBI" id="CHEBI:57692"/>
    </cofactor>
</comment>
<comment type="pathway">
    <text evidence="2">Protein modification; peptidyl-diphthamide biosynthesis.</text>
</comment>
<comment type="subunit">
    <text evidence="2">Monomer. Component of the 2-(3-amino-3-carboxypropyl)histidine synthase complex composed of DPH1, DPH2, DPH3 and a NADH-dependent reductase, predominantly CBR1.</text>
</comment>
<comment type="subcellular location">
    <subcellularLocation>
        <location evidence="2">Mitochondrion outer membrane</location>
        <topology evidence="3">Single-pass membrane protein</topology>
    </subcellularLocation>
</comment>
<comment type="similarity">
    <text evidence="6">Belongs to the flavoprotein pyridine nucleotide cytochrome reductase family.</text>
</comment>
<feature type="chain" id="PRO_0000330156" description="NADH-cytochrome b5 reductase 1">
    <location>
        <begin position="1"/>
        <end position="300"/>
    </location>
</feature>
<feature type="transmembrane region" description="Helical" evidence="3">
    <location>
        <begin position="8"/>
        <end position="28"/>
    </location>
</feature>
<feature type="domain" description="FAD-binding FR-type" evidence="4">
    <location>
        <begin position="57"/>
        <end position="160"/>
    </location>
</feature>
<feature type="region of interest" description="Disordered" evidence="5">
    <location>
        <begin position="34"/>
        <end position="54"/>
    </location>
</feature>
<feature type="compositionally biased region" description="Low complexity" evidence="5">
    <location>
        <begin position="34"/>
        <end position="45"/>
    </location>
</feature>
<feature type="binding site" evidence="1">
    <location>
        <begin position="140"/>
        <end position="155"/>
    </location>
    <ligand>
        <name>FAD</name>
        <dbReference type="ChEBI" id="CHEBI:57692"/>
    </ligand>
</feature>
<feature type="binding site" evidence="1">
    <location>
        <begin position="166"/>
        <end position="198"/>
    </location>
    <ligand>
        <name>FAD</name>
        <dbReference type="ChEBI" id="CHEBI:57692"/>
    </ligand>
</feature>
<evidence type="ECO:0000250" key="1"/>
<evidence type="ECO:0000250" key="2">
    <source>
        <dbReference type="UniProtKB" id="P38626"/>
    </source>
</evidence>
<evidence type="ECO:0000255" key="3"/>
<evidence type="ECO:0000255" key="4">
    <source>
        <dbReference type="PROSITE-ProRule" id="PRU00716"/>
    </source>
</evidence>
<evidence type="ECO:0000256" key="5">
    <source>
        <dbReference type="SAM" id="MobiDB-lite"/>
    </source>
</evidence>
<evidence type="ECO:0000305" key="6"/>
<gene>
    <name type="primary">CBR1</name>
    <name type="ORF">LELG_05681</name>
</gene>
<name>NCB5R_LODEL</name>
<proteinExistence type="inferred from homology"/>
<keyword id="KW-0274">FAD</keyword>
<keyword id="KW-0285">Flavoprotein</keyword>
<keyword id="KW-0472">Membrane</keyword>
<keyword id="KW-0496">Mitochondrion</keyword>
<keyword id="KW-1000">Mitochondrion outer membrane</keyword>
<keyword id="KW-0520">NAD</keyword>
<keyword id="KW-0560">Oxidoreductase</keyword>
<keyword id="KW-1185">Reference proteome</keyword>
<keyword id="KW-0808">Transferase</keyword>
<keyword id="KW-0812">Transmembrane</keyword>
<keyword id="KW-1133">Transmembrane helix</keyword>
<accession>A5E7U2</accession>
<organism>
    <name type="scientific">Lodderomyces elongisporus (strain ATCC 11503 / CBS 2605 / JCM 1781 / NBRC 1676 / NRRL YB-4239)</name>
    <name type="common">Yeast</name>
    <name type="synonym">Saccharomyces elongisporus</name>
    <dbReference type="NCBI Taxonomy" id="379508"/>
    <lineage>
        <taxon>Eukaryota</taxon>
        <taxon>Fungi</taxon>
        <taxon>Dikarya</taxon>
        <taxon>Ascomycota</taxon>
        <taxon>Saccharomycotina</taxon>
        <taxon>Pichiomycetes</taxon>
        <taxon>Debaryomycetaceae</taxon>
        <taxon>Candida/Lodderomyces clade</taxon>
        <taxon>Lodderomyces</taxon>
    </lineage>
</organism>
<dbReference type="EC" id="1.6.2.2" evidence="2"/>
<dbReference type="EMBL" id="CH981534">
    <property type="protein sequence ID" value="EDK47500.1"/>
    <property type="molecule type" value="Genomic_DNA"/>
</dbReference>
<dbReference type="RefSeq" id="XP_001523135.1">
    <property type="nucleotide sequence ID" value="XM_001523085.1"/>
</dbReference>
<dbReference type="SMR" id="A5E7U2"/>
<dbReference type="FunCoup" id="A5E7U2">
    <property type="interactions" value="257"/>
</dbReference>
<dbReference type="STRING" id="379508.A5E7U2"/>
<dbReference type="GeneID" id="5230252"/>
<dbReference type="KEGG" id="lel:PVL30_004439"/>
<dbReference type="VEuPathDB" id="FungiDB:LELG_05681"/>
<dbReference type="eggNOG" id="KOG0534">
    <property type="taxonomic scope" value="Eukaryota"/>
</dbReference>
<dbReference type="HOGENOM" id="CLU_003827_9_0_1"/>
<dbReference type="InParanoid" id="A5E7U2"/>
<dbReference type="OMA" id="VQIFMCG"/>
<dbReference type="OrthoDB" id="432685at2759"/>
<dbReference type="UniPathway" id="UPA00559"/>
<dbReference type="Proteomes" id="UP000001996">
    <property type="component" value="Unassembled WGS sequence"/>
</dbReference>
<dbReference type="GO" id="GO:0005783">
    <property type="term" value="C:endoplasmic reticulum"/>
    <property type="evidence" value="ECO:0007669"/>
    <property type="project" value="TreeGrafter"/>
</dbReference>
<dbReference type="GO" id="GO:0005741">
    <property type="term" value="C:mitochondrial outer membrane"/>
    <property type="evidence" value="ECO:0007669"/>
    <property type="project" value="UniProtKB-SubCell"/>
</dbReference>
<dbReference type="GO" id="GO:0005886">
    <property type="term" value="C:plasma membrane"/>
    <property type="evidence" value="ECO:0007669"/>
    <property type="project" value="TreeGrafter"/>
</dbReference>
<dbReference type="GO" id="GO:0090560">
    <property type="term" value="F:2-(3-amino-3-carboxypropyl)histidine synthase activity"/>
    <property type="evidence" value="ECO:0007669"/>
    <property type="project" value="EnsemblFungi"/>
</dbReference>
<dbReference type="GO" id="GO:0004128">
    <property type="term" value="F:cytochrome-b5 reductase activity, acting on NAD(P)H"/>
    <property type="evidence" value="ECO:0000250"/>
    <property type="project" value="UniProtKB"/>
</dbReference>
<dbReference type="GO" id="GO:0003954">
    <property type="term" value="F:NADH dehydrogenase activity"/>
    <property type="evidence" value="ECO:0000250"/>
    <property type="project" value="UniProtKB"/>
</dbReference>
<dbReference type="GO" id="GO:0017183">
    <property type="term" value="P:protein histidyl modification to diphthamide"/>
    <property type="evidence" value="ECO:0000250"/>
    <property type="project" value="UniProtKB"/>
</dbReference>
<dbReference type="GO" id="GO:0002926">
    <property type="term" value="P:tRNA wobble base 5-methoxycarbonylmethyl-2-thiouridinylation"/>
    <property type="evidence" value="ECO:0000250"/>
    <property type="project" value="UniProtKB"/>
</dbReference>
<dbReference type="CDD" id="cd06183">
    <property type="entry name" value="cyt_b5_reduct_like"/>
    <property type="match status" value="1"/>
</dbReference>
<dbReference type="FunFam" id="2.40.30.10:FF:000032">
    <property type="entry name" value="NADH-cytochrome b5 reductase"/>
    <property type="match status" value="1"/>
</dbReference>
<dbReference type="FunFam" id="3.40.50.80:FF:000019">
    <property type="entry name" value="NADH-cytochrome b5 reductase"/>
    <property type="match status" value="1"/>
</dbReference>
<dbReference type="Gene3D" id="3.40.50.80">
    <property type="entry name" value="Nucleotide-binding domain of ferredoxin-NADP reductase (FNR) module"/>
    <property type="match status" value="1"/>
</dbReference>
<dbReference type="Gene3D" id="2.40.30.10">
    <property type="entry name" value="Translation factors"/>
    <property type="match status" value="1"/>
</dbReference>
<dbReference type="InterPro" id="IPR001834">
    <property type="entry name" value="CBR-like"/>
</dbReference>
<dbReference type="InterPro" id="IPR008333">
    <property type="entry name" value="Cbr1-like_FAD-bd_dom"/>
</dbReference>
<dbReference type="InterPro" id="IPR017927">
    <property type="entry name" value="FAD-bd_FR_type"/>
</dbReference>
<dbReference type="InterPro" id="IPR001709">
    <property type="entry name" value="Flavoprot_Pyr_Nucl_cyt_Rdtase"/>
</dbReference>
<dbReference type="InterPro" id="IPR039261">
    <property type="entry name" value="FNR_nucleotide-bd"/>
</dbReference>
<dbReference type="InterPro" id="IPR001433">
    <property type="entry name" value="OxRdtase_FAD/NAD-bd"/>
</dbReference>
<dbReference type="InterPro" id="IPR017938">
    <property type="entry name" value="Riboflavin_synthase-like_b-brl"/>
</dbReference>
<dbReference type="PANTHER" id="PTHR19370">
    <property type="entry name" value="NADH-CYTOCHROME B5 REDUCTASE"/>
    <property type="match status" value="1"/>
</dbReference>
<dbReference type="PANTHER" id="PTHR19370:SF184">
    <property type="entry name" value="NADH-CYTOCHROME B5 REDUCTASE-LIKE"/>
    <property type="match status" value="1"/>
</dbReference>
<dbReference type="Pfam" id="PF00970">
    <property type="entry name" value="FAD_binding_6"/>
    <property type="match status" value="1"/>
</dbReference>
<dbReference type="Pfam" id="PF00175">
    <property type="entry name" value="NAD_binding_1"/>
    <property type="match status" value="1"/>
</dbReference>
<dbReference type="PRINTS" id="PR00406">
    <property type="entry name" value="CYTB5RDTASE"/>
</dbReference>
<dbReference type="PRINTS" id="PR00371">
    <property type="entry name" value="FPNCR"/>
</dbReference>
<dbReference type="SUPFAM" id="SSF52343">
    <property type="entry name" value="Ferredoxin reductase-like, C-terminal NADP-linked domain"/>
    <property type="match status" value="1"/>
</dbReference>
<dbReference type="SUPFAM" id="SSF63380">
    <property type="entry name" value="Riboflavin synthase domain-like"/>
    <property type="match status" value="1"/>
</dbReference>
<dbReference type="PROSITE" id="PS51384">
    <property type="entry name" value="FAD_FR"/>
    <property type="match status" value="1"/>
</dbReference>
<sequence length="300" mass="32936">MAETETNPLVVFATVATIIISFVTLYFFKQSAKSSTTSSSSSSSSKSKKGSPALIPDKFQKFPLISKTQVSHNSAIYRFGLPNPTDTLNLPIGQHISIGTIIDGKEVVRSYTPISLGDQQGHFDLLIKTYENGNISRHVAEKQVGDFVEIRGPKGFFTYTPNMKKSLGLIAGGTGIAPMYQIITAIMNNPEDKTKVHLLYANVTENDILLRDELEQYAKEHPDRLKIHHVLNEAPEGWQHLTGFVTPELIDKHLPKPSADTNLLLCGPPPMISAMKKAAVSLGFDKAKPVSKLGDQVFVF</sequence>
<reference key="1">
    <citation type="journal article" date="2009" name="Nature">
        <title>Evolution of pathogenicity and sexual reproduction in eight Candida genomes.</title>
        <authorList>
            <person name="Butler G."/>
            <person name="Rasmussen M.D."/>
            <person name="Lin M.F."/>
            <person name="Santos M.A.S."/>
            <person name="Sakthikumar S."/>
            <person name="Munro C.A."/>
            <person name="Rheinbay E."/>
            <person name="Grabherr M."/>
            <person name="Forche A."/>
            <person name="Reedy J.L."/>
            <person name="Agrafioti I."/>
            <person name="Arnaud M.B."/>
            <person name="Bates S."/>
            <person name="Brown A.J.P."/>
            <person name="Brunke S."/>
            <person name="Costanzo M.C."/>
            <person name="Fitzpatrick D.A."/>
            <person name="de Groot P.W.J."/>
            <person name="Harris D."/>
            <person name="Hoyer L.L."/>
            <person name="Hube B."/>
            <person name="Klis F.M."/>
            <person name="Kodira C."/>
            <person name="Lennard N."/>
            <person name="Logue M.E."/>
            <person name="Martin R."/>
            <person name="Neiman A.M."/>
            <person name="Nikolaou E."/>
            <person name="Quail M.A."/>
            <person name="Quinn J."/>
            <person name="Santos M.C."/>
            <person name="Schmitzberger F.F."/>
            <person name="Sherlock G."/>
            <person name="Shah P."/>
            <person name="Silverstein K.A.T."/>
            <person name="Skrzypek M.S."/>
            <person name="Soll D."/>
            <person name="Staggs R."/>
            <person name="Stansfield I."/>
            <person name="Stumpf M.P.H."/>
            <person name="Sudbery P.E."/>
            <person name="Srikantha T."/>
            <person name="Zeng Q."/>
            <person name="Berman J."/>
            <person name="Berriman M."/>
            <person name="Heitman J."/>
            <person name="Gow N.A.R."/>
            <person name="Lorenz M.C."/>
            <person name="Birren B.W."/>
            <person name="Kellis M."/>
            <person name="Cuomo C.A."/>
        </authorList>
    </citation>
    <scope>NUCLEOTIDE SEQUENCE [LARGE SCALE GENOMIC DNA]</scope>
    <source>
        <strain>ATCC 11503 / BCRC 21390 / CBS 2605 / JCM 1781 / NBRC 1676 / NRRL YB-4239</strain>
    </source>
</reference>